<reference key="1">
    <citation type="journal article" date="2001" name="Mol. Biol. Evol.">
        <title>Pseudogenes, junk DNA, and the dynamics of Rickettsia genomes.</title>
        <authorList>
            <person name="Andersson J.O."/>
            <person name="Andersson S.G.E."/>
        </authorList>
    </citation>
    <scope>NUCLEOTIDE SEQUENCE [GENOMIC DNA]</scope>
    <source>
        <strain>84-21C</strain>
    </source>
</reference>
<feature type="chain" id="PRO_0000101935" description="UDP-N-acetylmuramoyl-L-alanyl-D-glutamate--2,6-diaminopimelate ligase">
    <location>
        <begin position="1"/>
        <end position="479"/>
    </location>
</feature>
<feature type="short sequence motif" description="Meso-diaminopimelate recognition motif">
    <location>
        <begin position="396"/>
        <end position="399"/>
    </location>
</feature>
<feature type="binding site" evidence="1">
    <location>
        <position position="21"/>
    </location>
    <ligand>
        <name>UDP-N-acetyl-alpha-D-muramoyl-L-alanyl-D-glutamate</name>
        <dbReference type="ChEBI" id="CHEBI:83900"/>
    </ligand>
</feature>
<feature type="binding site" evidence="1">
    <location>
        <begin position="98"/>
        <end position="104"/>
    </location>
    <ligand>
        <name>ATP</name>
        <dbReference type="ChEBI" id="CHEBI:30616"/>
    </ligand>
</feature>
<feature type="binding site" evidence="1">
    <location>
        <begin position="144"/>
        <end position="145"/>
    </location>
    <ligand>
        <name>UDP-N-acetyl-alpha-D-muramoyl-L-alanyl-D-glutamate</name>
        <dbReference type="ChEBI" id="CHEBI:83900"/>
    </ligand>
</feature>
<feature type="binding site" evidence="1">
    <location>
        <position position="171"/>
    </location>
    <ligand>
        <name>UDP-N-acetyl-alpha-D-muramoyl-L-alanyl-D-glutamate</name>
        <dbReference type="ChEBI" id="CHEBI:83900"/>
    </ligand>
</feature>
<feature type="binding site" evidence="1">
    <location>
        <position position="177"/>
    </location>
    <ligand>
        <name>UDP-N-acetyl-alpha-D-muramoyl-L-alanyl-D-glutamate</name>
        <dbReference type="ChEBI" id="CHEBI:83900"/>
    </ligand>
</feature>
<feature type="binding site" evidence="1">
    <location>
        <position position="179"/>
    </location>
    <ligand>
        <name>UDP-N-acetyl-alpha-D-muramoyl-L-alanyl-D-glutamate</name>
        <dbReference type="ChEBI" id="CHEBI:83900"/>
    </ligand>
</feature>
<feature type="binding site" evidence="1">
    <location>
        <position position="372"/>
    </location>
    <ligand>
        <name>meso-2,6-diaminopimelate</name>
        <dbReference type="ChEBI" id="CHEBI:57791"/>
    </ligand>
</feature>
<feature type="binding site" evidence="1">
    <location>
        <begin position="396"/>
        <end position="399"/>
    </location>
    <ligand>
        <name>meso-2,6-diaminopimelate</name>
        <dbReference type="ChEBI" id="CHEBI:57791"/>
    </ligand>
</feature>
<feature type="binding site" evidence="1">
    <location>
        <position position="446"/>
    </location>
    <ligand>
        <name>meso-2,6-diaminopimelate</name>
        <dbReference type="ChEBI" id="CHEBI:57791"/>
    </ligand>
</feature>
<feature type="binding site" evidence="1">
    <location>
        <position position="450"/>
    </location>
    <ligand>
        <name>meso-2,6-diaminopimelate</name>
        <dbReference type="ChEBI" id="CHEBI:57791"/>
    </ligand>
</feature>
<feature type="modified residue" description="N6-carboxylysine" evidence="1">
    <location>
        <position position="211"/>
    </location>
</feature>
<accession>Q9AKI7</accession>
<gene>
    <name evidence="1" type="primary">murE</name>
</gene>
<comment type="function">
    <text evidence="1">Catalyzes the addition of meso-diaminopimelic acid to the nucleotide precursor UDP-N-acetylmuramoyl-L-alanyl-D-glutamate (UMAG) in the biosynthesis of bacterial cell-wall peptidoglycan.</text>
</comment>
<comment type="catalytic activity">
    <reaction evidence="1">
        <text>UDP-N-acetyl-alpha-D-muramoyl-L-alanyl-D-glutamate + meso-2,6-diaminopimelate + ATP = UDP-N-acetyl-alpha-D-muramoyl-L-alanyl-gamma-D-glutamyl-meso-2,6-diaminopimelate + ADP + phosphate + H(+)</text>
        <dbReference type="Rhea" id="RHEA:23676"/>
        <dbReference type="ChEBI" id="CHEBI:15378"/>
        <dbReference type="ChEBI" id="CHEBI:30616"/>
        <dbReference type="ChEBI" id="CHEBI:43474"/>
        <dbReference type="ChEBI" id="CHEBI:57791"/>
        <dbReference type="ChEBI" id="CHEBI:83900"/>
        <dbReference type="ChEBI" id="CHEBI:83905"/>
        <dbReference type="ChEBI" id="CHEBI:456216"/>
        <dbReference type="EC" id="6.3.2.13"/>
    </reaction>
</comment>
<comment type="cofactor">
    <cofactor evidence="1">
        <name>Mg(2+)</name>
        <dbReference type="ChEBI" id="CHEBI:18420"/>
    </cofactor>
</comment>
<comment type="pathway">
    <text evidence="1">Cell wall biogenesis; peptidoglycan biosynthesis.</text>
</comment>
<comment type="subcellular location">
    <subcellularLocation>
        <location evidence="1">Cytoplasm</location>
    </subcellularLocation>
</comment>
<comment type="PTM">
    <text evidence="1">Carboxylation is probably crucial for Mg(2+) binding and, consequently, for the gamma-phosphate positioning of ATP.</text>
</comment>
<comment type="similarity">
    <text evidence="1">Belongs to the MurCDEF family. MurE subfamily.</text>
</comment>
<organism>
    <name type="scientific">Rickettsia rickettsii</name>
    <dbReference type="NCBI Taxonomy" id="783"/>
    <lineage>
        <taxon>Bacteria</taxon>
        <taxon>Pseudomonadati</taxon>
        <taxon>Pseudomonadota</taxon>
        <taxon>Alphaproteobacteria</taxon>
        <taxon>Rickettsiales</taxon>
        <taxon>Rickettsiaceae</taxon>
        <taxon>Rickettsieae</taxon>
        <taxon>Rickettsia</taxon>
        <taxon>spotted fever group</taxon>
    </lineage>
</organism>
<proteinExistence type="inferred from homology"/>
<sequence length="479" mass="53640">MSHNLKQLFQQHNVKGLSINSKTVKDKDIFFAIKGRNTDGNDFIKDALSKGAVLVITDNKKNIVIDKVIYVKDVQAALYEAIEIFYPKKPKDLIAVTGTNGKSSVVSYIAQTYSLLGKKAASIGTIGVEIFGCVNLINDVPELTTLDYLSFRKIAHNLAENGIEYLVFEASSHGLDQARLREIKVNIACFTSFSQDHLDYHHTKENYLLAKLKLFINHLLPNGIAILNSDIEEIEFVKDYLHNHNVKFITVGTKGDLEITRLNCSLKGQNINFTFNNREYNFNTPIIGSFQASNLLIAVLSIHYIGFAFDDVIDSLVEVKAVKGRMERIDNTNIFVDYAHTPDALEKALTELKNIKLRDSKLSVVFGCGGNRDKAKRSLMGQIAAKRADTIIITDDNPRHEDPKLIRAEIISGIEKADYTEIANREEAIKYGINNLKQDDILLVAGKGHENYQIIGDKKLPFDDAEVVRKCIKVCHPVA</sequence>
<name>MURE_RICRI</name>
<evidence type="ECO:0000255" key="1">
    <source>
        <dbReference type="HAMAP-Rule" id="MF_00208"/>
    </source>
</evidence>
<keyword id="KW-0067">ATP-binding</keyword>
<keyword id="KW-0131">Cell cycle</keyword>
<keyword id="KW-0132">Cell division</keyword>
<keyword id="KW-0133">Cell shape</keyword>
<keyword id="KW-0961">Cell wall biogenesis/degradation</keyword>
<keyword id="KW-0963">Cytoplasm</keyword>
<keyword id="KW-0436">Ligase</keyword>
<keyword id="KW-0460">Magnesium</keyword>
<keyword id="KW-0547">Nucleotide-binding</keyword>
<keyword id="KW-0573">Peptidoglycan synthesis</keyword>
<dbReference type="EC" id="6.3.2.13" evidence="1"/>
<dbReference type="EMBL" id="AJ293314">
    <property type="protein sequence ID" value="CAC33671.1"/>
    <property type="molecule type" value="Genomic_DNA"/>
</dbReference>
<dbReference type="RefSeq" id="WP_012151073.1">
    <property type="nucleotide sequence ID" value="NZ_CP151153.1"/>
</dbReference>
<dbReference type="SMR" id="Q9AKI7"/>
<dbReference type="OMA" id="EYFIMEV"/>
<dbReference type="UniPathway" id="UPA00219"/>
<dbReference type="GO" id="GO:0005737">
    <property type="term" value="C:cytoplasm"/>
    <property type="evidence" value="ECO:0007669"/>
    <property type="project" value="UniProtKB-SubCell"/>
</dbReference>
<dbReference type="GO" id="GO:0005524">
    <property type="term" value="F:ATP binding"/>
    <property type="evidence" value="ECO:0007669"/>
    <property type="project" value="UniProtKB-UniRule"/>
</dbReference>
<dbReference type="GO" id="GO:0000287">
    <property type="term" value="F:magnesium ion binding"/>
    <property type="evidence" value="ECO:0007669"/>
    <property type="project" value="UniProtKB-UniRule"/>
</dbReference>
<dbReference type="GO" id="GO:0008765">
    <property type="term" value="F:UDP-N-acetylmuramoylalanyl-D-glutamate-2,6-diaminopimelate ligase activity"/>
    <property type="evidence" value="ECO:0007669"/>
    <property type="project" value="UniProtKB-UniRule"/>
</dbReference>
<dbReference type="GO" id="GO:0051301">
    <property type="term" value="P:cell division"/>
    <property type="evidence" value="ECO:0007669"/>
    <property type="project" value="UniProtKB-KW"/>
</dbReference>
<dbReference type="GO" id="GO:0071555">
    <property type="term" value="P:cell wall organization"/>
    <property type="evidence" value="ECO:0007669"/>
    <property type="project" value="UniProtKB-KW"/>
</dbReference>
<dbReference type="GO" id="GO:0009252">
    <property type="term" value="P:peptidoglycan biosynthetic process"/>
    <property type="evidence" value="ECO:0007669"/>
    <property type="project" value="UniProtKB-UniRule"/>
</dbReference>
<dbReference type="GO" id="GO:0008360">
    <property type="term" value="P:regulation of cell shape"/>
    <property type="evidence" value="ECO:0007669"/>
    <property type="project" value="UniProtKB-KW"/>
</dbReference>
<dbReference type="Gene3D" id="3.90.190.20">
    <property type="entry name" value="Mur ligase, C-terminal domain"/>
    <property type="match status" value="1"/>
</dbReference>
<dbReference type="Gene3D" id="3.40.1190.10">
    <property type="entry name" value="Mur-like, catalytic domain"/>
    <property type="match status" value="1"/>
</dbReference>
<dbReference type="Gene3D" id="3.40.1390.10">
    <property type="entry name" value="MurE/MurF, N-terminal domain"/>
    <property type="match status" value="1"/>
</dbReference>
<dbReference type="HAMAP" id="MF_00208">
    <property type="entry name" value="MurE"/>
    <property type="match status" value="1"/>
</dbReference>
<dbReference type="InterPro" id="IPR036565">
    <property type="entry name" value="Mur-like_cat_sf"/>
</dbReference>
<dbReference type="InterPro" id="IPR004101">
    <property type="entry name" value="Mur_ligase_C"/>
</dbReference>
<dbReference type="InterPro" id="IPR036615">
    <property type="entry name" value="Mur_ligase_C_dom_sf"/>
</dbReference>
<dbReference type="InterPro" id="IPR013221">
    <property type="entry name" value="Mur_ligase_cen"/>
</dbReference>
<dbReference type="InterPro" id="IPR000713">
    <property type="entry name" value="Mur_ligase_N"/>
</dbReference>
<dbReference type="InterPro" id="IPR035911">
    <property type="entry name" value="MurE/MurF_N"/>
</dbReference>
<dbReference type="InterPro" id="IPR005761">
    <property type="entry name" value="UDP-N-AcMur-Glu-dNH2Pim_ligase"/>
</dbReference>
<dbReference type="NCBIfam" id="TIGR01085">
    <property type="entry name" value="murE"/>
    <property type="match status" value="1"/>
</dbReference>
<dbReference type="NCBIfam" id="NF001124">
    <property type="entry name" value="PRK00139.1-2"/>
    <property type="match status" value="1"/>
</dbReference>
<dbReference type="NCBIfam" id="NF001126">
    <property type="entry name" value="PRK00139.1-4"/>
    <property type="match status" value="1"/>
</dbReference>
<dbReference type="PANTHER" id="PTHR23135">
    <property type="entry name" value="MUR LIGASE FAMILY MEMBER"/>
    <property type="match status" value="1"/>
</dbReference>
<dbReference type="PANTHER" id="PTHR23135:SF4">
    <property type="entry name" value="UDP-N-ACETYLMURAMOYL-L-ALANYL-D-GLUTAMATE--2,6-DIAMINOPIMELATE LIGASE MURE HOMOLOG, CHLOROPLASTIC"/>
    <property type="match status" value="1"/>
</dbReference>
<dbReference type="Pfam" id="PF01225">
    <property type="entry name" value="Mur_ligase"/>
    <property type="match status" value="1"/>
</dbReference>
<dbReference type="Pfam" id="PF02875">
    <property type="entry name" value="Mur_ligase_C"/>
    <property type="match status" value="1"/>
</dbReference>
<dbReference type="Pfam" id="PF08245">
    <property type="entry name" value="Mur_ligase_M"/>
    <property type="match status" value="1"/>
</dbReference>
<dbReference type="SUPFAM" id="SSF53623">
    <property type="entry name" value="MurD-like peptide ligases, catalytic domain"/>
    <property type="match status" value="1"/>
</dbReference>
<dbReference type="SUPFAM" id="SSF53244">
    <property type="entry name" value="MurD-like peptide ligases, peptide-binding domain"/>
    <property type="match status" value="1"/>
</dbReference>
<dbReference type="SUPFAM" id="SSF63418">
    <property type="entry name" value="MurE/MurF N-terminal domain"/>
    <property type="match status" value="1"/>
</dbReference>
<protein>
    <recommendedName>
        <fullName evidence="1">UDP-N-acetylmuramoyl-L-alanyl-D-glutamate--2,6-diaminopimelate ligase</fullName>
        <ecNumber evidence="1">6.3.2.13</ecNumber>
    </recommendedName>
    <alternativeName>
        <fullName evidence="1">Meso-A2pm-adding enzyme</fullName>
    </alternativeName>
    <alternativeName>
        <fullName evidence="1">Meso-diaminopimelate-adding enzyme</fullName>
    </alternativeName>
    <alternativeName>
        <fullName evidence="1">UDP-MurNAc-L-Ala-D-Glu:meso-diaminopimelate ligase</fullName>
    </alternativeName>
    <alternativeName>
        <fullName evidence="1">UDP-MurNAc-tripeptide synthetase</fullName>
    </alternativeName>
    <alternativeName>
        <fullName evidence="1">UDP-N-acetylmuramyl-tripeptide synthetase</fullName>
    </alternativeName>
</protein>